<comment type="function">
    <text>Catalyzes the acyloin condensation reaction between C atoms 2 and 3 of pyruvate and glyceraldehyde 3-phosphate to yield 1-deoxy-D-xylulose-5-phosphate (DXP).</text>
</comment>
<comment type="catalytic activity">
    <reaction evidence="1">
        <text>D-glyceraldehyde 3-phosphate + pyruvate + H(+) = 1-deoxy-D-xylulose 5-phosphate + CO2</text>
        <dbReference type="Rhea" id="RHEA:12605"/>
        <dbReference type="ChEBI" id="CHEBI:15361"/>
        <dbReference type="ChEBI" id="CHEBI:15378"/>
        <dbReference type="ChEBI" id="CHEBI:16526"/>
        <dbReference type="ChEBI" id="CHEBI:57792"/>
        <dbReference type="ChEBI" id="CHEBI:59776"/>
        <dbReference type="EC" id="2.2.1.7"/>
    </reaction>
</comment>
<comment type="cofactor">
    <cofactor evidence="1">
        <name>Mg(2+)</name>
        <dbReference type="ChEBI" id="CHEBI:18420"/>
    </cofactor>
    <text evidence="1">Binds 1 Mg(2+) ion per subunit.</text>
</comment>
<comment type="cofactor">
    <cofactor evidence="1">
        <name>thiamine diphosphate</name>
        <dbReference type="ChEBI" id="CHEBI:58937"/>
    </cofactor>
    <text evidence="1">Binds 1 thiamine pyrophosphate per subunit.</text>
</comment>
<comment type="pathway">
    <text evidence="1">Metabolic intermediate biosynthesis; 1-deoxy-D-xylulose 5-phosphate biosynthesis; 1-deoxy-D-xylulose 5-phosphate from D-glyceraldehyde 3-phosphate and pyruvate: step 1/1.</text>
</comment>
<comment type="subunit">
    <text evidence="1">Homodimer.</text>
</comment>
<comment type="similarity">
    <text evidence="1">Belongs to the transketolase family. DXPS subfamily.</text>
</comment>
<organism>
    <name type="scientific">Pseudomonas aeruginosa (strain ATCC 15692 / DSM 22644 / CIP 104116 / JCM 14847 / LMG 12228 / 1C / PRS 101 / PAO1)</name>
    <dbReference type="NCBI Taxonomy" id="208964"/>
    <lineage>
        <taxon>Bacteria</taxon>
        <taxon>Pseudomonadati</taxon>
        <taxon>Pseudomonadota</taxon>
        <taxon>Gammaproteobacteria</taxon>
        <taxon>Pseudomonadales</taxon>
        <taxon>Pseudomonadaceae</taxon>
        <taxon>Pseudomonas</taxon>
    </lineage>
</organism>
<feature type="chain" id="PRO_0000189142" description="1-deoxy-D-xylulose-5-phosphate synthase">
    <location>
        <begin position="1"/>
        <end position="627"/>
    </location>
</feature>
<feature type="binding site" evidence="1">
    <location>
        <position position="87"/>
    </location>
    <ligand>
        <name>thiamine diphosphate</name>
        <dbReference type="ChEBI" id="CHEBI:58937"/>
    </ligand>
</feature>
<feature type="binding site" evidence="1">
    <location>
        <begin position="128"/>
        <end position="130"/>
    </location>
    <ligand>
        <name>thiamine diphosphate</name>
        <dbReference type="ChEBI" id="CHEBI:58937"/>
    </ligand>
</feature>
<feature type="binding site" evidence="1">
    <location>
        <position position="159"/>
    </location>
    <ligand>
        <name>Mg(2+)</name>
        <dbReference type="ChEBI" id="CHEBI:18420"/>
    </ligand>
</feature>
<feature type="binding site" evidence="1">
    <location>
        <begin position="160"/>
        <end position="161"/>
    </location>
    <ligand>
        <name>thiamine diphosphate</name>
        <dbReference type="ChEBI" id="CHEBI:58937"/>
    </ligand>
</feature>
<feature type="binding site" evidence="1">
    <location>
        <position position="188"/>
    </location>
    <ligand>
        <name>Mg(2+)</name>
        <dbReference type="ChEBI" id="CHEBI:18420"/>
    </ligand>
</feature>
<feature type="binding site" evidence="1">
    <location>
        <position position="188"/>
    </location>
    <ligand>
        <name>thiamine diphosphate</name>
        <dbReference type="ChEBI" id="CHEBI:58937"/>
    </ligand>
</feature>
<feature type="binding site" evidence="1">
    <location>
        <position position="295"/>
    </location>
    <ligand>
        <name>thiamine diphosphate</name>
        <dbReference type="ChEBI" id="CHEBI:58937"/>
    </ligand>
</feature>
<feature type="binding site" evidence="1">
    <location>
        <position position="375"/>
    </location>
    <ligand>
        <name>thiamine diphosphate</name>
        <dbReference type="ChEBI" id="CHEBI:58937"/>
    </ligand>
</feature>
<sequence length="627" mass="68050">MPKTLHEIPRERPATPLLDRASSPAELRRLGEADLETLADELRQYLLYTVGQTGGHFGAGLGVVELTIALHYVFDTPDDRLVWDVGHQAYPHKILTERRELMGTLRQKNGLAAFPRRAESEYDTFGVGHSSTSISAALGMAIAARLQGKERKSVAVIGDGALTAGMAFEALNHASEVDADMLVILNDNDMSISHNVGGLSNYLAKILSSRTYSSMREGSKKVLSRLPGAWEIARRTEEYAKGMLVPGTLFEELGWNYIGPIDGHDLPTLVATLRNMRDMKGPQFLHVVTKKGKGFAPAELDPIGYHAITKLEAPGSAPKKTGGPKYSSVFGQWLCDMAAQDARLLGITPAMKEGSDLVAFSERYPERYFDVAIAEQHAVTLAAGMACEGMKPVVAIYSTFLQRAYDQLIHDVAVQHLDVLFAIDRAGLVGEDGPTHAGSFDISYLRCIPGMLVMTPSDEDELRKLLTTGYLFDGPAAVRYPRGSGPNHPIDPDLQPVEIGKGVVRRRGGRVALLVFGVQLAEAMKVAESLDATVVDMRFVKPLDEALVRELAGSHELLVTIEENAVMGGAGSAVGEFLASEGLEVPLLQLGLPDYYVEHAKPSEMLAECGLDAAGIEKAVRQRLDRQ</sequence>
<name>DXS_PSEAE</name>
<reference key="1">
    <citation type="journal article" date="2000" name="FEMS Microbiol. Lett.">
        <title>Tools for discovery of inhibitors of the 1-deoxy-D-xylulose 5-phosphate (DXP) synthase and DXP reductoisomerase: an approach with enzymes from the pathogenic bacterium Pseudomonas aeruginosa.</title>
        <authorList>
            <person name="Altincicek B."/>
            <person name="Hintz M."/>
            <person name="Sanderbrand S."/>
            <person name="Wiesner J."/>
            <person name="Beck E."/>
            <person name="Jomaa H."/>
        </authorList>
    </citation>
    <scope>NUCLEOTIDE SEQUENCE [GENOMIC DNA]</scope>
    <scope>CHARACTERIZATION</scope>
</reference>
<reference key="2">
    <citation type="journal article" date="2000" name="Nature">
        <title>Complete genome sequence of Pseudomonas aeruginosa PAO1, an opportunistic pathogen.</title>
        <authorList>
            <person name="Stover C.K."/>
            <person name="Pham X.-Q.T."/>
            <person name="Erwin A.L."/>
            <person name="Mizoguchi S.D."/>
            <person name="Warrener P."/>
            <person name="Hickey M.J."/>
            <person name="Brinkman F.S.L."/>
            <person name="Hufnagle W.O."/>
            <person name="Kowalik D.J."/>
            <person name="Lagrou M."/>
            <person name="Garber R.L."/>
            <person name="Goltry L."/>
            <person name="Tolentino E."/>
            <person name="Westbrock-Wadman S."/>
            <person name="Yuan Y."/>
            <person name="Brody L.L."/>
            <person name="Coulter S.N."/>
            <person name="Folger K.R."/>
            <person name="Kas A."/>
            <person name="Larbig K."/>
            <person name="Lim R.M."/>
            <person name="Smith K.A."/>
            <person name="Spencer D.H."/>
            <person name="Wong G.K.-S."/>
            <person name="Wu Z."/>
            <person name="Paulsen I.T."/>
            <person name="Reizer J."/>
            <person name="Saier M.H. Jr."/>
            <person name="Hancock R.E.W."/>
            <person name="Lory S."/>
            <person name="Olson M.V."/>
        </authorList>
    </citation>
    <scope>NUCLEOTIDE SEQUENCE [LARGE SCALE GENOMIC DNA]</scope>
    <source>
        <strain>ATCC 15692 / DSM 22644 / CIP 104116 / JCM 14847 / LMG 12228 / 1C / PRS 101 / PAO1</strain>
    </source>
</reference>
<keyword id="KW-0414">Isoprene biosynthesis</keyword>
<keyword id="KW-0460">Magnesium</keyword>
<keyword id="KW-0479">Metal-binding</keyword>
<keyword id="KW-1185">Reference proteome</keyword>
<keyword id="KW-0784">Thiamine biosynthesis</keyword>
<keyword id="KW-0786">Thiamine pyrophosphate</keyword>
<keyword id="KW-0808">Transferase</keyword>
<gene>
    <name evidence="1" type="primary">dxs</name>
    <name type="ordered locus">PA4044</name>
</gene>
<dbReference type="EC" id="2.2.1.7" evidence="1"/>
<dbReference type="EMBL" id="AF282878">
    <property type="protein sequence ID" value="AAF97240.1"/>
    <property type="molecule type" value="Genomic_DNA"/>
</dbReference>
<dbReference type="EMBL" id="AE004091">
    <property type="protein sequence ID" value="AAG07431.1"/>
    <property type="molecule type" value="Genomic_DNA"/>
</dbReference>
<dbReference type="PIR" id="G83139">
    <property type="entry name" value="G83139"/>
</dbReference>
<dbReference type="RefSeq" id="NP_252733.1">
    <property type="nucleotide sequence ID" value="NC_002516.2"/>
</dbReference>
<dbReference type="RefSeq" id="WP_003102816.1">
    <property type="nucleotide sequence ID" value="NZ_QZGE01000013.1"/>
</dbReference>
<dbReference type="SMR" id="Q9KGU7"/>
<dbReference type="FunCoup" id="Q9KGU7">
    <property type="interactions" value="593"/>
</dbReference>
<dbReference type="STRING" id="208964.PA4044"/>
<dbReference type="PaxDb" id="208964-PA4044"/>
<dbReference type="GeneID" id="879037"/>
<dbReference type="KEGG" id="pae:PA4044"/>
<dbReference type="PATRIC" id="fig|208964.12.peg.4235"/>
<dbReference type="PseudoCAP" id="PA4044"/>
<dbReference type="HOGENOM" id="CLU_009227_1_4_6"/>
<dbReference type="InParanoid" id="Q9KGU7"/>
<dbReference type="OrthoDB" id="9803371at2"/>
<dbReference type="PhylomeDB" id="Q9KGU7"/>
<dbReference type="BioCyc" id="PAER208964:G1FZ6-4117-MONOMER"/>
<dbReference type="UniPathway" id="UPA00064">
    <property type="reaction ID" value="UER00091"/>
</dbReference>
<dbReference type="Proteomes" id="UP000002438">
    <property type="component" value="Chromosome"/>
</dbReference>
<dbReference type="GO" id="GO:0005829">
    <property type="term" value="C:cytosol"/>
    <property type="evidence" value="ECO:0000318"/>
    <property type="project" value="GO_Central"/>
</dbReference>
<dbReference type="GO" id="GO:0008661">
    <property type="term" value="F:1-deoxy-D-xylulose-5-phosphate synthase activity"/>
    <property type="evidence" value="ECO:0000318"/>
    <property type="project" value="GO_Central"/>
</dbReference>
<dbReference type="GO" id="GO:0000287">
    <property type="term" value="F:magnesium ion binding"/>
    <property type="evidence" value="ECO:0007669"/>
    <property type="project" value="UniProtKB-UniRule"/>
</dbReference>
<dbReference type="GO" id="GO:0030976">
    <property type="term" value="F:thiamine pyrophosphate binding"/>
    <property type="evidence" value="ECO:0007669"/>
    <property type="project" value="UniProtKB-UniRule"/>
</dbReference>
<dbReference type="GO" id="GO:0052865">
    <property type="term" value="P:1-deoxy-D-xylulose 5-phosphate biosynthetic process"/>
    <property type="evidence" value="ECO:0007669"/>
    <property type="project" value="UniProtKB-UniPathway"/>
</dbReference>
<dbReference type="GO" id="GO:0019288">
    <property type="term" value="P:isopentenyl diphosphate biosynthetic process, methylerythritol 4-phosphate pathway"/>
    <property type="evidence" value="ECO:0000318"/>
    <property type="project" value="GO_Central"/>
</dbReference>
<dbReference type="GO" id="GO:0016114">
    <property type="term" value="P:terpenoid biosynthetic process"/>
    <property type="evidence" value="ECO:0007669"/>
    <property type="project" value="UniProtKB-UniRule"/>
</dbReference>
<dbReference type="GO" id="GO:0009228">
    <property type="term" value="P:thiamine biosynthetic process"/>
    <property type="evidence" value="ECO:0007669"/>
    <property type="project" value="UniProtKB-UniRule"/>
</dbReference>
<dbReference type="CDD" id="cd02007">
    <property type="entry name" value="TPP_DXS"/>
    <property type="match status" value="1"/>
</dbReference>
<dbReference type="CDD" id="cd07033">
    <property type="entry name" value="TPP_PYR_DXS_TK_like"/>
    <property type="match status" value="1"/>
</dbReference>
<dbReference type="FunFam" id="3.40.50.920:FF:000002">
    <property type="entry name" value="1-deoxy-D-xylulose-5-phosphate synthase"/>
    <property type="match status" value="1"/>
</dbReference>
<dbReference type="FunFam" id="3.40.50.970:FF:000005">
    <property type="entry name" value="1-deoxy-D-xylulose-5-phosphate synthase"/>
    <property type="match status" value="1"/>
</dbReference>
<dbReference type="Gene3D" id="3.40.50.920">
    <property type="match status" value="1"/>
</dbReference>
<dbReference type="Gene3D" id="3.40.50.970">
    <property type="match status" value="2"/>
</dbReference>
<dbReference type="HAMAP" id="MF_00315">
    <property type="entry name" value="DXP_synth"/>
    <property type="match status" value="1"/>
</dbReference>
<dbReference type="InterPro" id="IPR005477">
    <property type="entry name" value="Dxylulose-5-P_synthase"/>
</dbReference>
<dbReference type="InterPro" id="IPR029061">
    <property type="entry name" value="THDP-binding"/>
</dbReference>
<dbReference type="InterPro" id="IPR009014">
    <property type="entry name" value="Transketo_C/PFOR_II"/>
</dbReference>
<dbReference type="InterPro" id="IPR005475">
    <property type="entry name" value="Transketolase-like_Pyr-bd"/>
</dbReference>
<dbReference type="InterPro" id="IPR020826">
    <property type="entry name" value="Transketolase_BS"/>
</dbReference>
<dbReference type="InterPro" id="IPR033248">
    <property type="entry name" value="Transketolase_C"/>
</dbReference>
<dbReference type="NCBIfam" id="TIGR00204">
    <property type="entry name" value="dxs"/>
    <property type="match status" value="1"/>
</dbReference>
<dbReference type="NCBIfam" id="NF003933">
    <property type="entry name" value="PRK05444.2-2"/>
    <property type="match status" value="1"/>
</dbReference>
<dbReference type="PANTHER" id="PTHR43322">
    <property type="entry name" value="1-D-DEOXYXYLULOSE 5-PHOSPHATE SYNTHASE-RELATED"/>
    <property type="match status" value="1"/>
</dbReference>
<dbReference type="PANTHER" id="PTHR43322:SF5">
    <property type="entry name" value="1-DEOXY-D-XYLULOSE-5-PHOSPHATE SYNTHASE, CHLOROPLASTIC"/>
    <property type="match status" value="1"/>
</dbReference>
<dbReference type="Pfam" id="PF13292">
    <property type="entry name" value="DXP_synthase_N"/>
    <property type="match status" value="1"/>
</dbReference>
<dbReference type="Pfam" id="PF02779">
    <property type="entry name" value="Transket_pyr"/>
    <property type="match status" value="1"/>
</dbReference>
<dbReference type="Pfam" id="PF02780">
    <property type="entry name" value="Transketolase_C"/>
    <property type="match status" value="1"/>
</dbReference>
<dbReference type="SMART" id="SM00861">
    <property type="entry name" value="Transket_pyr"/>
    <property type="match status" value="1"/>
</dbReference>
<dbReference type="SUPFAM" id="SSF52518">
    <property type="entry name" value="Thiamin diphosphate-binding fold (THDP-binding)"/>
    <property type="match status" value="2"/>
</dbReference>
<dbReference type="SUPFAM" id="SSF52922">
    <property type="entry name" value="TK C-terminal domain-like"/>
    <property type="match status" value="1"/>
</dbReference>
<dbReference type="PROSITE" id="PS00802">
    <property type="entry name" value="TRANSKETOLASE_2"/>
    <property type="match status" value="1"/>
</dbReference>
<evidence type="ECO:0000255" key="1">
    <source>
        <dbReference type="HAMAP-Rule" id="MF_00315"/>
    </source>
</evidence>
<protein>
    <recommendedName>
        <fullName evidence="1">1-deoxy-D-xylulose-5-phosphate synthase</fullName>
        <ecNumber evidence="1">2.2.1.7</ecNumber>
    </recommendedName>
    <alternativeName>
        <fullName evidence="1">1-deoxyxylulose-5-phosphate synthase</fullName>
        <shortName evidence="1">DXP synthase</shortName>
        <shortName evidence="1">DXPS</shortName>
    </alternativeName>
</protein>
<proteinExistence type="evidence at protein level"/>
<accession>Q9KGU7</accession>